<name>HIS4_PROMM</name>
<organism>
    <name type="scientific">Prochlorococcus marinus (strain MIT 9313)</name>
    <dbReference type="NCBI Taxonomy" id="74547"/>
    <lineage>
        <taxon>Bacteria</taxon>
        <taxon>Bacillati</taxon>
        <taxon>Cyanobacteriota</taxon>
        <taxon>Cyanophyceae</taxon>
        <taxon>Synechococcales</taxon>
        <taxon>Prochlorococcaceae</taxon>
        <taxon>Prochlorococcus</taxon>
    </lineage>
</organism>
<gene>
    <name evidence="1" type="primary">hisA</name>
    <name type="ordered locus">PMT_0520</name>
</gene>
<evidence type="ECO:0000255" key="1">
    <source>
        <dbReference type="HAMAP-Rule" id="MF_01014"/>
    </source>
</evidence>
<proteinExistence type="inferred from homology"/>
<comment type="catalytic activity">
    <reaction evidence="1">
        <text>1-(5-phospho-beta-D-ribosyl)-5-[(5-phospho-beta-D-ribosylamino)methylideneamino]imidazole-4-carboxamide = 5-[(5-phospho-1-deoxy-D-ribulos-1-ylimino)methylamino]-1-(5-phospho-beta-D-ribosyl)imidazole-4-carboxamide</text>
        <dbReference type="Rhea" id="RHEA:15469"/>
        <dbReference type="ChEBI" id="CHEBI:58435"/>
        <dbReference type="ChEBI" id="CHEBI:58525"/>
        <dbReference type="EC" id="5.3.1.16"/>
    </reaction>
</comment>
<comment type="pathway">
    <text evidence="1">Amino-acid biosynthesis; L-histidine biosynthesis; L-histidine from 5-phospho-alpha-D-ribose 1-diphosphate: step 4/9.</text>
</comment>
<comment type="subcellular location">
    <subcellularLocation>
        <location evidence="1">Cytoplasm</location>
    </subcellularLocation>
</comment>
<comment type="similarity">
    <text evidence="1">Belongs to the HisA/HisF family.</text>
</comment>
<protein>
    <recommendedName>
        <fullName evidence="1">1-(5-phosphoribosyl)-5-[(5-phosphoribosylamino)methylideneamino] imidazole-4-carboxamide isomerase</fullName>
        <ecNumber evidence="1">5.3.1.16</ecNumber>
    </recommendedName>
    <alternativeName>
        <fullName evidence="1">Phosphoribosylformimino-5-aminoimidazole carboxamide ribotide isomerase</fullName>
    </alternativeName>
</protein>
<keyword id="KW-0028">Amino-acid biosynthesis</keyword>
<keyword id="KW-0963">Cytoplasm</keyword>
<keyword id="KW-0368">Histidine biosynthesis</keyword>
<keyword id="KW-0413">Isomerase</keyword>
<keyword id="KW-1185">Reference proteome</keyword>
<accession>Q7TV18</accession>
<reference key="1">
    <citation type="journal article" date="2003" name="Nature">
        <title>Genome divergence in two Prochlorococcus ecotypes reflects oceanic niche differentiation.</title>
        <authorList>
            <person name="Rocap G."/>
            <person name="Larimer F.W."/>
            <person name="Lamerdin J.E."/>
            <person name="Malfatti S."/>
            <person name="Chain P."/>
            <person name="Ahlgren N.A."/>
            <person name="Arellano A."/>
            <person name="Coleman M."/>
            <person name="Hauser L."/>
            <person name="Hess W.R."/>
            <person name="Johnson Z.I."/>
            <person name="Land M.L."/>
            <person name="Lindell D."/>
            <person name="Post A.F."/>
            <person name="Regala W."/>
            <person name="Shah M."/>
            <person name="Shaw S.L."/>
            <person name="Steglich C."/>
            <person name="Sullivan M.B."/>
            <person name="Ting C.S."/>
            <person name="Tolonen A."/>
            <person name="Webb E.A."/>
            <person name="Zinser E.R."/>
            <person name="Chisholm S.W."/>
        </authorList>
    </citation>
    <scope>NUCLEOTIDE SEQUENCE [LARGE SCALE GENOMIC DNA]</scope>
    <source>
        <strain>MIT 9313</strain>
    </source>
</reference>
<feature type="chain" id="PRO_0000142036" description="1-(5-phosphoribosyl)-5-[(5-phosphoribosylamino)methylideneamino] imidazole-4-carboxamide isomerase">
    <location>
        <begin position="1"/>
        <end position="255"/>
    </location>
</feature>
<feature type="active site" description="Proton acceptor" evidence="1">
    <location>
        <position position="8"/>
    </location>
</feature>
<feature type="active site" description="Proton donor" evidence="1">
    <location>
        <position position="129"/>
    </location>
</feature>
<sequence length="255" mass="26818">MEIIPAIDLLDSVCVRLHQGDYEKVTRFSEDPVDQALSWQKQGATRLHLVDLDGAKSGEPVNDSCVRAITSALNIPVQLGGGVRTLERAEELLAYGLEQVILGTVAIEQPQLVKQLAQRNPGRIIVGIDAKNGKVATRGWISQSEVNATDLASDFNAAGIAAIISTDIATDGTLEGPNLESLRAMANASSVPVIASGGVGCMADLLSLLALEPYGVSGVIVGRALYDGKVDLKEAIRAIGDGRLQDPPTSKPLMA</sequence>
<dbReference type="EC" id="5.3.1.16" evidence="1"/>
<dbReference type="EMBL" id="BX548175">
    <property type="protein sequence ID" value="CAE20695.1"/>
    <property type="molecule type" value="Genomic_DNA"/>
</dbReference>
<dbReference type="RefSeq" id="WP_011129899.1">
    <property type="nucleotide sequence ID" value="NC_005071.1"/>
</dbReference>
<dbReference type="SMR" id="Q7TV18"/>
<dbReference type="KEGG" id="pmt:PMT_0520"/>
<dbReference type="eggNOG" id="COG0106">
    <property type="taxonomic scope" value="Bacteria"/>
</dbReference>
<dbReference type="HOGENOM" id="CLU_048577_1_1_3"/>
<dbReference type="OrthoDB" id="9807749at2"/>
<dbReference type="UniPathway" id="UPA00031">
    <property type="reaction ID" value="UER00009"/>
</dbReference>
<dbReference type="Proteomes" id="UP000001423">
    <property type="component" value="Chromosome"/>
</dbReference>
<dbReference type="GO" id="GO:0005737">
    <property type="term" value="C:cytoplasm"/>
    <property type="evidence" value="ECO:0007669"/>
    <property type="project" value="UniProtKB-SubCell"/>
</dbReference>
<dbReference type="GO" id="GO:0003949">
    <property type="term" value="F:1-(5-phosphoribosyl)-5-[(5-phosphoribosylamino)methylideneamino]imidazole-4-carboxamide isomerase activity"/>
    <property type="evidence" value="ECO:0007669"/>
    <property type="project" value="UniProtKB-UniRule"/>
</dbReference>
<dbReference type="GO" id="GO:0000105">
    <property type="term" value="P:L-histidine biosynthetic process"/>
    <property type="evidence" value="ECO:0007669"/>
    <property type="project" value="UniProtKB-UniRule"/>
</dbReference>
<dbReference type="GO" id="GO:0000162">
    <property type="term" value="P:L-tryptophan biosynthetic process"/>
    <property type="evidence" value="ECO:0007669"/>
    <property type="project" value="TreeGrafter"/>
</dbReference>
<dbReference type="CDD" id="cd04732">
    <property type="entry name" value="HisA"/>
    <property type="match status" value="1"/>
</dbReference>
<dbReference type="FunFam" id="3.20.20.70:FF:000009">
    <property type="entry name" value="1-(5-phosphoribosyl)-5-[(5-phosphoribosylamino)methylideneamino] imidazole-4-carboxamide isomerase"/>
    <property type="match status" value="1"/>
</dbReference>
<dbReference type="Gene3D" id="3.20.20.70">
    <property type="entry name" value="Aldolase class I"/>
    <property type="match status" value="1"/>
</dbReference>
<dbReference type="HAMAP" id="MF_01014">
    <property type="entry name" value="HisA"/>
    <property type="match status" value="1"/>
</dbReference>
<dbReference type="InterPro" id="IPR013785">
    <property type="entry name" value="Aldolase_TIM"/>
</dbReference>
<dbReference type="InterPro" id="IPR006062">
    <property type="entry name" value="His_biosynth"/>
</dbReference>
<dbReference type="InterPro" id="IPR006063">
    <property type="entry name" value="HisA_bact_arch"/>
</dbReference>
<dbReference type="InterPro" id="IPR044524">
    <property type="entry name" value="Isoase_HisA-like"/>
</dbReference>
<dbReference type="InterPro" id="IPR023016">
    <property type="entry name" value="Isoase_HisA-like_bact"/>
</dbReference>
<dbReference type="InterPro" id="IPR011060">
    <property type="entry name" value="RibuloseP-bd_barrel"/>
</dbReference>
<dbReference type="NCBIfam" id="TIGR00007">
    <property type="entry name" value="1-(5-phosphoribosyl)-5-[(5-phosphoribosylamino)methylideneamino]imidazole-4-carboxamide isomerase"/>
    <property type="match status" value="1"/>
</dbReference>
<dbReference type="NCBIfam" id="NF010112">
    <property type="entry name" value="PRK13585.1"/>
    <property type="match status" value="1"/>
</dbReference>
<dbReference type="PANTHER" id="PTHR43090">
    <property type="entry name" value="1-(5-PHOSPHORIBOSYL)-5-[(5-PHOSPHORIBOSYLAMINO)METHYLIDENEAMINO] IMIDAZOLE-4-CARBOXAMIDE ISOMERASE"/>
    <property type="match status" value="1"/>
</dbReference>
<dbReference type="PANTHER" id="PTHR43090:SF2">
    <property type="entry name" value="1-(5-PHOSPHORIBOSYL)-5-[(5-PHOSPHORIBOSYLAMINO)METHYLIDENEAMINO] IMIDAZOLE-4-CARBOXAMIDE ISOMERASE"/>
    <property type="match status" value="1"/>
</dbReference>
<dbReference type="Pfam" id="PF00977">
    <property type="entry name" value="His_biosynth"/>
    <property type="match status" value="1"/>
</dbReference>
<dbReference type="SUPFAM" id="SSF51366">
    <property type="entry name" value="Ribulose-phoshate binding barrel"/>
    <property type="match status" value="1"/>
</dbReference>